<evidence type="ECO:0000250" key="1"/>
<evidence type="ECO:0000305" key="2"/>
<keyword id="KW-0025">Alternative splicing</keyword>
<keyword id="KW-0028">Amino-acid biosynthesis</keyword>
<keyword id="KW-0067">ATP-binding</keyword>
<keyword id="KW-0418">Kinase</keyword>
<keyword id="KW-0511">Multifunctional enzyme</keyword>
<keyword id="KW-0521">NADP</keyword>
<keyword id="KW-0547">Nucleotide-binding</keyword>
<keyword id="KW-0560">Oxidoreductase</keyword>
<keyword id="KW-0641">Proline biosynthesis</keyword>
<keyword id="KW-1185">Reference proteome</keyword>
<keyword id="KW-0808">Transferase</keyword>
<comment type="catalytic activity">
    <reaction>
        <text>L-glutamate + ATP = L-glutamyl 5-phosphate + ADP</text>
        <dbReference type="Rhea" id="RHEA:14877"/>
        <dbReference type="ChEBI" id="CHEBI:29985"/>
        <dbReference type="ChEBI" id="CHEBI:30616"/>
        <dbReference type="ChEBI" id="CHEBI:58274"/>
        <dbReference type="ChEBI" id="CHEBI:456216"/>
        <dbReference type="EC" id="2.7.2.11"/>
    </reaction>
</comment>
<comment type="catalytic activity">
    <reaction>
        <text>L-glutamate 5-semialdehyde + phosphate + NADP(+) = L-glutamyl 5-phosphate + NADPH + H(+)</text>
        <dbReference type="Rhea" id="RHEA:19541"/>
        <dbReference type="ChEBI" id="CHEBI:15378"/>
        <dbReference type="ChEBI" id="CHEBI:43474"/>
        <dbReference type="ChEBI" id="CHEBI:57783"/>
        <dbReference type="ChEBI" id="CHEBI:58066"/>
        <dbReference type="ChEBI" id="CHEBI:58274"/>
        <dbReference type="ChEBI" id="CHEBI:58349"/>
        <dbReference type="EC" id="1.2.1.41"/>
    </reaction>
</comment>
<comment type="pathway">
    <text>Amino-acid biosynthesis; L-proline biosynthesis; L-glutamate 5-semialdehyde from L-glutamate: step 1/2.</text>
</comment>
<comment type="pathway">
    <text>Amino-acid biosynthesis; L-proline biosynthesis; L-glutamate 5-semialdehyde from L-glutamate: step 2/2.</text>
</comment>
<comment type="alternative products">
    <event type="alternative splicing"/>
    <isoform>
        <id>P54889-1</id>
        <name>b</name>
        <sequence type="displayed"/>
    </isoform>
    <isoform>
        <id>P54889-2</id>
        <name>a</name>
        <sequence type="described" ref="VSP_047890"/>
    </isoform>
</comment>
<comment type="similarity">
    <text evidence="2">In the N-terminal section; belongs to the glutamate 5-kinase family.</text>
</comment>
<comment type="similarity">
    <text evidence="2">In the C-terminal section; belongs to the gamma-glutamyl phosphate reductase family.</text>
</comment>
<accession>P54889</accession>
<accession>Q9BI69</accession>
<name>ALH13_CAEEL</name>
<gene>
    <name type="primary">alh-13</name>
    <name type="ORF">T22H6.2</name>
</gene>
<dbReference type="EC" id="2.7.2.11"/>
<dbReference type="EC" id="1.2.1.41"/>
<dbReference type="EMBL" id="Z50797">
    <property type="protein sequence ID" value="CAA90672.2"/>
    <property type="molecule type" value="Genomic_DNA"/>
</dbReference>
<dbReference type="EMBL" id="Z50797">
    <property type="protein sequence ID" value="CAC35828.2"/>
    <property type="molecule type" value="Genomic_DNA"/>
</dbReference>
<dbReference type="PIR" id="T25140">
    <property type="entry name" value="T25140"/>
</dbReference>
<dbReference type="RefSeq" id="NP_510132.2">
    <molecule id="P54889-1"/>
    <property type="nucleotide sequence ID" value="NM_077731.7"/>
</dbReference>
<dbReference type="RefSeq" id="NP_510133.2">
    <molecule id="P54889-2"/>
    <property type="nucleotide sequence ID" value="NM_077732.9"/>
</dbReference>
<dbReference type="SMR" id="P54889"/>
<dbReference type="BioGRID" id="46321">
    <property type="interactions" value="11"/>
</dbReference>
<dbReference type="FunCoup" id="P54889">
    <property type="interactions" value="1348"/>
</dbReference>
<dbReference type="STRING" id="6239.T22H6.2b.1"/>
<dbReference type="PaxDb" id="6239-T22H6.2b"/>
<dbReference type="PeptideAtlas" id="P54889"/>
<dbReference type="EnsemblMetazoa" id="T22H6.2a.1">
    <molecule id="P54889-2"/>
    <property type="protein sequence ID" value="T22H6.2a.1"/>
    <property type="gene ID" value="WBGene00011938"/>
</dbReference>
<dbReference type="EnsemblMetazoa" id="T22H6.2b.1">
    <molecule id="P54889-1"/>
    <property type="protein sequence ID" value="T22H6.2b.1"/>
    <property type="gene ID" value="WBGene00011938"/>
</dbReference>
<dbReference type="GeneID" id="181417"/>
<dbReference type="KEGG" id="cel:CELE_T22H6.2"/>
<dbReference type="UCSC" id="T22H6.2b">
    <property type="organism name" value="c. elegans"/>
</dbReference>
<dbReference type="AGR" id="WB:WBGene00011938"/>
<dbReference type="CTD" id="181417"/>
<dbReference type="WormBase" id="T22H6.2a">
    <molecule id="P54889-2"/>
    <property type="protein sequence ID" value="CE47944"/>
    <property type="gene ID" value="WBGene00011938"/>
    <property type="gene designation" value="alh-13"/>
</dbReference>
<dbReference type="WormBase" id="T22H6.2b">
    <molecule id="P54889-1"/>
    <property type="protein sequence ID" value="CE47964"/>
    <property type="gene ID" value="WBGene00011938"/>
    <property type="gene designation" value="alh-13"/>
</dbReference>
<dbReference type="eggNOG" id="KOG1154">
    <property type="taxonomic scope" value="Eukaryota"/>
</dbReference>
<dbReference type="eggNOG" id="KOG4165">
    <property type="taxonomic scope" value="Eukaryota"/>
</dbReference>
<dbReference type="GeneTree" id="ENSGT00500000044903"/>
<dbReference type="InParanoid" id="P54889"/>
<dbReference type="OMA" id="PPMFIVD"/>
<dbReference type="OrthoDB" id="1934954at2759"/>
<dbReference type="PhylomeDB" id="P54889"/>
<dbReference type="Reactome" id="R-CEL-8964539">
    <property type="pathway name" value="Glutamate and glutamine metabolism"/>
</dbReference>
<dbReference type="Reactome" id="R-CEL-9837999">
    <property type="pathway name" value="Mitochondrial protein degradation"/>
</dbReference>
<dbReference type="UniPathway" id="UPA00098">
    <property type="reaction ID" value="UER00359"/>
</dbReference>
<dbReference type="UniPathway" id="UPA00098">
    <property type="reaction ID" value="UER00360"/>
</dbReference>
<dbReference type="PRO" id="PR:P54889"/>
<dbReference type="Proteomes" id="UP000001940">
    <property type="component" value="Chromosome X"/>
</dbReference>
<dbReference type="Bgee" id="WBGene00011938">
    <property type="expression patterns" value="Expressed in embryo and 3 other cell types or tissues"/>
</dbReference>
<dbReference type="GO" id="GO:0005739">
    <property type="term" value="C:mitochondrion"/>
    <property type="evidence" value="ECO:0007005"/>
    <property type="project" value="WormBase"/>
</dbReference>
<dbReference type="GO" id="GO:0005524">
    <property type="term" value="F:ATP binding"/>
    <property type="evidence" value="ECO:0007669"/>
    <property type="project" value="UniProtKB-KW"/>
</dbReference>
<dbReference type="GO" id="GO:0004349">
    <property type="term" value="F:glutamate 5-kinase activity"/>
    <property type="evidence" value="ECO:0007669"/>
    <property type="project" value="UniProtKB-EC"/>
</dbReference>
<dbReference type="GO" id="GO:0004350">
    <property type="term" value="F:glutamate-5-semialdehyde dehydrogenase activity"/>
    <property type="evidence" value="ECO:0000318"/>
    <property type="project" value="GO_Central"/>
</dbReference>
<dbReference type="GO" id="GO:0055129">
    <property type="term" value="P:L-proline biosynthetic process"/>
    <property type="evidence" value="ECO:0007669"/>
    <property type="project" value="UniProtKB-UniPathway"/>
</dbReference>
<dbReference type="CDD" id="cd04256">
    <property type="entry name" value="AAK_P5CS_ProBA"/>
    <property type="match status" value="1"/>
</dbReference>
<dbReference type="CDD" id="cd07079">
    <property type="entry name" value="ALDH_F18-19_ProA-GPR"/>
    <property type="match status" value="1"/>
</dbReference>
<dbReference type="FunFam" id="3.40.1160.10:FF:000010">
    <property type="entry name" value="Delta-1-pyrroline-5-carboxylate synthase"/>
    <property type="match status" value="1"/>
</dbReference>
<dbReference type="FunFam" id="3.40.309.10:FF:000015">
    <property type="entry name" value="Delta-1-pyrroline-5-carboxylate synthase"/>
    <property type="match status" value="1"/>
</dbReference>
<dbReference type="Gene3D" id="3.40.1160.10">
    <property type="entry name" value="Acetylglutamate kinase-like"/>
    <property type="match status" value="1"/>
</dbReference>
<dbReference type="Gene3D" id="3.40.605.10">
    <property type="entry name" value="Aldehyde Dehydrogenase, Chain A, domain 1"/>
    <property type="match status" value="1"/>
</dbReference>
<dbReference type="Gene3D" id="3.40.309.10">
    <property type="entry name" value="Aldehyde Dehydrogenase, Chain A, domain 2"/>
    <property type="match status" value="1"/>
</dbReference>
<dbReference type="HAMAP" id="MF_00412">
    <property type="entry name" value="ProA"/>
    <property type="match status" value="1"/>
</dbReference>
<dbReference type="HAMAP" id="MF_00456">
    <property type="entry name" value="ProB"/>
    <property type="match status" value="1"/>
</dbReference>
<dbReference type="InterPro" id="IPR036393">
    <property type="entry name" value="AceGlu_kinase-like_sf"/>
</dbReference>
<dbReference type="InterPro" id="IPR016161">
    <property type="entry name" value="Ald_DH/histidinol_DH"/>
</dbReference>
<dbReference type="InterPro" id="IPR016163">
    <property type="entry name" value="Ald_DH_C"/>
</dbReference>
<dbReference type="InterPro" id="IPR016162">
    <property type="entry name" value="Ald_DH_N"/>
</dbReference>
<dbReference type="InterPro" id="IPR015590">
    <property type="entry name" value="Aldehyde_DH_dom"/>
</dbReference>
<dbReference type="InterPro" id="IPR001048">
    <property type="entry name" value="Asp/Glu/Uridylate_kinase"/>
</dbReference>
<dbReference type="InterPro" id="IPR020593">
    <property type="entry name" value="G-glutamylP_reductase_CS"/>
</dbReference>
<dbReference type="InterPro" id="IPR041744">
    <property type="entry name" value="G5K_ProBA"/>
</dbReference>
<dbReference type="InterPro" id="IPR001057">
    <property type="entry name" value="Glu/AcGlu_kinase"/>
</dbReference>
<dbReference type="InterPro" id="IPR005715">
    <property type="entry name" value="Glu_5kinase/COase_Synthase"/>
</dbReference>
<dbReference type="InterPro" id="IPR019797">
    <property type="entry name" value="Glutamate_5-kinase_CS"/>
</dbReference>
<dbReference type="InterPro" id="IPR000965">
    <property type="entry name" value="GPR_dom"/>
</dbReference>
<dbReference type="InterPro" id="IPR005766">
    <property type="entry name" value="P5_carboxy_syn"/>
</dbReference>
<dbReference type="NCBIfam" id="TIGR01092">
    <property type="entry name" value="P5CS"/>
    <property type="match status" value="1"/>
</dbReference>
<dbReference type="NCBIfam" id="NF001221">
    <property type="entry name" value="PRK00197.1"/>
    <property type="match status" value="1"/>
</dbReference>
<dbReference type="NCBIfam" id="TIGR00407">
    <property type="entry name" value="proA"/>
    <property type="match status" value="1"/>
</dbReference>
<dbReference type="NCBIfam" id="TIGR01027">
    <property type="entry name" value="proB"/>
    <property type="match status" value="1"/>
</dbReference>
<dbReference type="PANTHER" id="PTHR11063:SF8">
    <property type="entry name" value="DELTA-1-PYRROLINE-5-CARBOXYLATE SYNTHASE"/>
    <property type="match status" value="1"/>
</dbReference>
<dbReference type="PANTHER" id="PTHR11063">
    <property type="entry name" value="GLUTAMATE SEMIALDEHYDE DEHYDROGENASE"/>
    <property type="match status" value="1"/>
</dbReference>
<dbReference type="Pfam" id="PF00696">
    <property type="entry name" value="AA_kinase"/>
    <property type="match status" value="1"/>
</dbReference>
<dbReference type="Pfam" id="PF00171">
    <property type="entry name" value="Aldedh"/>
    <property type="match status" value="1"/>
</dbReference>
<dbReference type="PIRSF" id="PIRSF036429">
    <property type="entry name" value="P5C_syn"/>
    <property type="match status" value="1"/>
</dbReference>
<dbReference type="PRINTS" id="PR00474">
    <property type="entry name" value="GLU5KINASE"/>
</dbReference>
<dbReference type="SUPFAM" id="SSF53720">
    <property type="entry name" value="ALDH-like"/>
    <property type="match status" value="1"/>
</dbReference>
<dbReference type="SUPFAM" id="SSF53633">
    <property type="entry name" value="Carbamate kinase-like"/>
    <property type="match status" value="1"/>
</dbReference>
<dbReference type="PROSITE" id="PS00902">
    <property type="entry name" value="GLUTAMATE_5_KINASE"/>
    <property type="match status" value="1"/>
</dbReference>
<dbReference type="PROSITE" id="PS01223">
    <property type="entry name" value="PROA"/>
    <property type="match status" value="1"/>
</dbReference>
<sequence length="802" mass="86694">MFRATRCLRLPLRNSHINILRPTQTELIKTRSSALAPYEKVSPITAVGATPVGVGNGNYCYSTKTRQKHPLINTRNDLKKAQRVVVKLGSAVITREDECGLALGRLASIVEQVSELQQSGRQMLIVSSGAVAFGRQKLRQELVMSMSMRQTLRGPSGMTADKRACAASGMPGLMSLYEQLFQQYGITVAQVLLTKPDIDDDQRRKNLQATIESLLSLNIIPIVNANDAVAPDPKLNMHISDNDSLAARLSAEIEAELLIILSNVNGVYTGPPDLEGSRLLYTYVPSENSGVTFGANSKFGTGGMESKVTACVNALNNGVTTVITNGLAQDAITDAVAGKKIGTMFCNTKGYEGPPIEEVAEKCRDAGRQLAALSNKERGAMVRHLAALLVDKEKYIIEANQTDLANAKSAGLDPQLLNRLKMTPEKIQDLHAGLNTIADSAETLVGRVLKKVKISEGLFLEQVTVPIGSLMVIFESRPDCLPQVASLAMASGNALLLKGGKEAEESNKALHALVQEALGTHGFEMRDAVTLVRSREDVADLLQLKDLIDLIIPRGSSDLVRSMQEKSKGIPVLGHAEGVCHVYIDKDCDEQKAIQIVRDSKCDYPSACNAAETILIHKDLATAPFFDSLCSMFKAEGVKLHAGPKLAALLKFAPPPAESMSFEYGSLECTLEVVDNVEEAVAHIIRYGSGHTESIITENTNTAEHFLKHVDSACAFHNASTRFADGYRFGLGAEVGISTGRIHARGPVGVEGLLTTKWLLRGEGHLVEDFKNGKYSYLHENLNPSEVYRALDAAGELKKATA</sequence>
<reference key="1">
    <citation type="journal article" date="1998" name="Science">
        <title>Genome sequence of the nematode C. elegans: a platform for investigating biology.</title>
        <authorList>
            <consortium name="The C. elegans sequencing consortium"/>
        </authorList>
    </citation>
    <scope>NUCLEOTIDE SEQUENCE [LARGE SCALE GENOMIC DNA]</scope>
    <source>
        <strain>Bristol N2</strain>
    </source>
</reference>
<organism>
    <name type="scientific">Caenorhabditis elegans</name>
    <dbReference type="NCBI Taxonomy" id="6239"/>
    <lineage>
        <taxon>Eukaryota</taxon>
        <taxon>Metazoa</taxon>
        <taxon>Ecdysozoa</taxon>
        <taxon>Nematoda</taxon>
        <taxon>Chromadorea</taxon>
        <taxon>Rhabditida</taxon>
        <taxon>Rhabditina</taxon>
        <taxon>Rhabditomorpha</taxon>
        <taxon>Rhabditoidea</taxon>
        <taxon>Rhabditidae</taxon>
        <taxon>Peloderinae</taxon>
        <taxon>Caenorhabditis</taxon>
    </lineage>
</organism>
<proteinExistence type="inferred from homology"/>
<protein>
    <recommendedName>
        <fullName>Probable delta-1-pyrroline-5-carboxylate synthase</fullName>
        <shortName>P5CS</shortName>
    </recommendedName>
    <domain>
        <recommendedName>
            <fullName>Glutamate 5-kinase</fullName>
            <shortName>GK</shortName>
            <ecNumber>2.7.2.11</ecNumber>
        </recommendedName>
        <alternativeName>
            <fullName>Gamma-glutamyl kinase</fullName>
        </alternativeName>
    </domain>
    <domain>
        <recommendedName>
            <fullName>Gamma-glutamyl phosphate reductase</fullName>
            <shortName>GPR</shortName>
            <ecNumber>1.2.1.41</ecNumber>
        </recommendedName>
        <alternativeName>
            <fullName>Aldehyde dehydrogenase family 13</fullName>
        </alternativeName>
        <alternativeName>
            <fullName>Glutamate-5-semialdehyde dehydrogenase</fullName>
        </alternativeName>
        <alternativeName>
            <fullName>Glutamyl-gamma-semialdehyde dehydrogenase</fullName>
        </alternativeName>
    </domain>
</protein>
<feature type="chain" id="PRO_0000109771" description="Probable delta-1-pyrroline-5-carboxylate synthase">
    <location>
        <begin position="1"/>
        <end position="802"/>
    </location>
</feature>
<feature type="region of interest" description="Glutamate 5-kinase">
    <location>
        <begin position="1"/>
        <end position="354"/>
    </location>
</feature>
<feature type="region of interest" description="Gamma-glutamyl phosphate reductase">
    <location>
        <begin position="355"/>
        <end position="802"/>
    </location>
</feature>
<feature type="binding site" evidence="1">
    <location>
        <position position="128"/>
    </location>
    <ligand>
        <name>substrate</name>
    </ligand>
</feature>
<feature type="binding site" evidence="1">
    <location>
        <position position="227"/>
    </location>
    <ligand>
        <name>substrate</name>
    </ligand>
</feature>
<feature type="binding site" evidence="1">
    <location>
        <position position="242"/>
    </location>
    <ligand>
        <name>substrate</name>
    </ligand>
</feature>
<feature type="binding site" evidence="1">
    <location>
        <begin position="262"/>
        <end position="263"/>
    </location>
    <ligand>
        <name>ATP</name>
        <dbReference type="ChEBI" id="CHEBI:30616"/>
    </ligand>
</feature>
<feature type="binding site" evidence="1">
    <location>
        <begin position="301"/>
        <end position="307"/>
    </location>
    <ligand>
        <name>ATP</name>
        <dbReference type="ChEBI" id="CHEBI:30616"/>
    </ligand>
</feature>
<feature type="splice variant" id="VSP_047890" description="In isoform a." evidence="2">
    <location>
        <begin position="61"/>
        <end position="62"/>
    </location>
</feature>